<name>PSBD_PARMW</name>
<accession>Q7TTI2</accession>
<dbReference type="EC" id="1.10.3.9" evidence="1"/>
<dbReference type="EMBL" id="BX569690">
    <property type="protein sequence ID" value="CAE07192.1"/>
    <property type="molecule type" value="Genomic_DNA"/>
</dbReference>
<dbReference type="EMBL" id="BX569695">
    <property type="protein sequence ID" value="CAE08747.1"/>
    <property type="molecule type" value="Genomic_DNA"/>
</dbReference>
<dbReference type="RefSeq" id="WP_011127544.1">
    <property type="nucleotide sequence ID" value="NC_005070.1"/>
</dbReference>
<dbReference type="SMR" id="Q7TTI2"/>
<dbReference type="STRING" id="84588.SYNW0677"/>
<dbReference type="KEGG" id="syw:SYNW0677"/>
<dbReference type="KEGG" id="syw:SYNW2232"/>
<dbReference type="eggNOG" id="ENOG502Z8JK">
    <property type="taxonomic scope" value="Bacteria"/>
</dbReference>
<dbReference type="HOGENOM" id="CLU_077965_0_0_3"/>
<dbReference type="Proteomes" id="UP000001422">
    <property type="component" value="Chromosome"/>
</dbReference>
<dbReference type="GO" id="GO:0009523">
    <property type="term" value="C:photosystem II"/>
    <property type="evidence" value="ECO:0007669"/>
    <property type="project" value="UniProtKB-KW"/>
</dbReference>
<dbReference type="GO" id="GO:0031676">
    <property type="term" value="C:plasma membrane-derived thylakoid membrane"/>
    <property type="evidence" value="ECO:0007669"/>
    <property type="project" value="UniProtKB-SubCell"/>
</dbReference>
<dbReference type="GO" id="GO:0016168">
    <property type="term" value="F:chlorophyll binding"/>
    <property type="evidence" value="ECO:0007669"/>
    <property type="project" value="UniProtKB-UniRule"/>
</dbReference>
<dbReference type="GO" id="GO:0045156">
    <property type="term" value="F:electron transporter, transferring electrons within the cyclic electron transport pathway of photosynthesis activity"/>
    <property type="evidence" value="ECO:0007669"/>
    <property type="project" value="InterPro"/>
</dbReference>
<dbReference type="GO" id="GO:0005506">
    <property type="term" value="F:iron ion binding"/>
    <property type="evidence" value="ECO:0007669"/>
    <property type="project" value="UniProtKB-UniRule"/>
</dbReference>
<dbReference type="GO" id="GO:0010242">
    <property type="term" value="F:oxygen evolving activity"/>
    <property type="evidence" value="ECO:0007669"/>
    <property type="project" value="UniProtKB-EC"/>
</dbReference>
<dbReference type="GO" id="GO:0009772">
    <property type="term" value="P:photosynthetic electron transport in photosystem II"/>
    <property type="evidence" value="ECO:0007669"/>
    <property type="project" value="InterPro"/>
</dbReference>
<dbReference type="FunFam" id="1.20.85.10:FF:000001">
    <property type="entry name" value="photosystem II D2 protein-like"/>
    <property type="match status" value="1"/>
</dbReference>
<dbReference type="Gene3D" id="1.20.85.10">
    <property type="entry name" value="Photosystem II protein D1-like"/>
    <property type="match status" value="1"/>
</dbReference>
<dbReference type="HAMAP" id="MF_01383">
    <property type="entry name" value="PSII_PsbD_D2"/>
    <property type="match status" value="1"/>
</dbReference>
<dbReference type="InterPro" id="IPR055266">
    <property type="entry name" value="D1/D2"/>
</dbReference>
<dbReference type="InterPro" id="IPR036854">
    <property type="entry name" value="Photo_II_D1/D2_sf"/>
</dbReference>
<dbReference type="InterPro" id="IPR000484">
    <property type="entry name" value="Photo_RC_L/M"/>
</dbReference>
<dbReference type="InterPro" id="IPR055265">
    <property type="entry name" value="Photo_RC_L/M_CS"/>
</dbReference>
<dbReference type="InterPro" id="IPR005868">
    <property type="entry name" value="PSII_PsbD/D2"/>
</dbReference>
<dbReference type="NCBIfam" id="TIGR01152">
    <property type="entry name" value="psbD"/>
    <property type="match status" value="1"/>
</dbReference>
<dbReference type="PANTHER" id="PTHR33149:SF12">
    <property type="entry name" value="PHOTOSYSTEM II D2 PROTEIN"/>
    <property type="match status" value="1"/>
</dbReference>
<dbReference type="PANTHER" id="PTHR33149">
    <property type="entry name" value="PHOTOSYSTEM II PROTEIN D1"/>
    <property type="match status" value="1"/>
</dbReference>
<dbReference type="Pfam" id="PF00124">
    <property type="entry name" value="Photo_RC"/>
    <property type="match status" value="1"/>
</dbReference>
<dbReference type="PRINTS" id="PR00256">
    <property type="entry name" value="REACTNCENTRE"/>
</dbReference>
<dbReference type="SUPFAM" id="SSF81483">
    <property type="entry name" value="Bacterial photosystem II reaction centre, L and M subunits"/>
    <property type="match status" value="1"/>
</dbReference>
<dbReference type="PROSITE" id="PS00244">
    <property type="entry name" value="REACTION_CENTER"/>
    <property type="match status" value="1"/>
</dbReference>
<protein>
    <recommendedName>
        <fullName evidence="1">Photosystem II D2 protein</fullName>
        <shortName evidence="1">PSII D2 protein</shortName>
        <ecNumber evidence="1">1.10.3.9</ecNumber>
    </recommendedName>
    <alternativeName>
        <fullName evidence="1">Photosystem Q(A) protein</fullName>
    </alternativeName>
</protein>
<sequence>MTIAVGRAPQRGWFDILDDWLKRDRFVFVGWSGILLFPTAYLAIGGWLTGTTFVTSWYTHGIASSYLEGCNFLTAAVSTPADAMGHSLLLLWGPEAQGDFVRWCQLGGLWAFVALHGAFALIGFMLRQFEIARLVGIRPYNAIAFSGPIAVFVSVFLMYPLGQSSWFFAPSFGVAAIFRFLLFLQGFHNWTLNPFHMMGVAGILGGALLCAIHGATVENTLFEDGEQANTFKAFEPTQEEETYSMVTANRFWSQIFGIAFSNKRWLHFFMLFVPVMGLWTSSIGIIGLALNLRAYDFVSQEIRAAEDPEFETFYTKNILLNEGLRAWMAPADQPHENFVFPEEVLPRGNAL</sequence>
<comment type="function">
    <text evidence="1">Photosystem II (PSII) is a light-driven water:plastoquinone oxidoreductase that uses light energy to abstract electrons from H(2)O, generating O(2) and a proton gradient subsequently used for ATP formation. It consists of a core antenna complex that captures photons, and an electron transfer chain that converts photonic excitation into a charge separation. The D1/D2 (PsbA/PsbD) reaction center heterodimer binds P680, the primary electron donor of PSII as well as several subsequent electron acceptors. D2 is needed for assembly of a stable PSII complex.</text>
</comment>
<comment type="catalytic activity">
    <reaction evidence="1">
        <text>2 a plastoquinone + 4 hnu + 2 H2O = 2 a plastoquinol + O2</text>
        <dbReference type="Rhea" id="RHEA:36359"/>
        <dbReference type="Rhea" id="RHEA-COMP:9561"/>
        <dbReference type="Rhea" id="RHEA-COMP:9562"/>
        <dbReference type="ChEBI" id="CHEBI:15377"/>
        <dbReference type="ChEBI" id="CHEBI:15379"/>
        <dbReference type="ChEBI" id="CHEBI:17757"/>
        <dbReference type="ChEBI" id="CHEBI:30212"/>
        <dbReference type="ChEBI" id="CHEBI:62192"/>
        <dbReference type="EC" id="1.10.3.9"/>
    </reaction>
</comment>
<comment type="cofactor">
    <text evidence="1">The D1/D2 heterodimer binds P680, chlorophylls that are the primary electron donor of PSII, and subsequent electron acceptors. It shares a non-heme iron and each subunit binds pheophytin, quinone, additional chlorophylls, carotenoids and lipids. There is also a Cl(-1) ion associated with D1 and D2, which is required for oxygen evolution. The PSII complex binds additional chlorophylls, carotenoids and specific lipids.</text>
</comment>
<comment type="subunit">
    <text evidence="1">PSII is composed of 1 copy each of membrane proteins PsbA, PsbB, PsbC, PsbD, PsbE, PsbF, PsbH, PsbI, PsbJ, PsbK, PsbL, PsbM, PsbT, PsbX, PsbY, PsbZ, Psb30/Ycf12, peripheral proteins PsbO, CyanoQ (PsbQ), PsbU, PsbV and a large number of cofactors. It forms dimeric complexes.</text>
</comment>
<comment type="subcellular location">
    <subcellularLocation>
        <location evidence="1">Cellular thylakoid membrane</location>
        <topology evidence="1">Multi-pass membrane protein</topology>
    </subcellularLocation>
</comment>
<comment type="miscellaneous">
    <text evidence="1">2 of the reaction center chlorophylls (ChlD1 and ChlD2) are entirely coordinated by water.</text>
</comment>
<comment type="similarity">
    <text evidence="1">Belongs to the reaction center PufL/M/PsbA/D family.</text>
</comment>
<proteinExistence type="inferred from homology"/>
<reference key="1">
    <citation type="journal article" date="2003" name="Nature">
        <title>The genome of a motile marine Synechococcus.</title>
        <authorList>
            <person name="Palenik B."/>
            <person name="Brahamsha B."/>
            <person name="Larimer F.W."/>
            <person name="Land M.L."/>
            <person name="Hauser L."/>
            <person name="Chain P."/>
            <person name="Lamerdin J.E."/>
            <person name="Regala W."/>
            <person name="Allen E.E."/>
            <person name="McCarren J."/>
            <person name="Paulsen I.T."/>
            <person name="Dufresne A."/>
            <person name="Partensky F."/>
            <person name="Webb E.A."/>
            <person name="Waterbury J."/>
        </authorList>
    </citation>
    <scope>NUCLEOTIDE SEQUENCE [LARGE SCALE GENOMIC DNA]</scope>
    <source>
        <strain>WH8102</strain>
    </source>
</reference>
<feature type="chain" id="PRO_0000359613" description="Photosystem II D2 protein">
    <location>
        <begin position="1"/>
        <end position="351"/>
    </location>
</feature>
<feature type="transmembrane region" description="Helical" evidence="1">
    <location>
        <begin position="39"/>
        <end position="59"/>
    </location>
</feature>
<feature type="transmembrane region" description="Helical" evidence="1">
    <location>
        <begin position="123"/>
        <end position="139"/>
    </location>
</feature>
<feature type="transmembrane region" description="Helical" evidence="1">
    <location>
        <begin position="151"/>
        <end position="164"/>
    </location>
</feature>
<feature type="transmembrane region" description="Helical" evidence="1">
    <location>
        <begin position="206"/>
        <end position="226"/>
    </location>
</feature>
<feature type="transmembrane region" description="Helical" evidence="1">
    <location>
        <begin position="277"/>
        <end position="293"/>
    </location>
</feature>
<feature type="binding site" description="axial binding residue" evidence="1">
    <location>
        <position position="116"/>
    </location>
    <ligand>
        <name>chlorophyll a</name>
        <dbReference type="ChEBI" id="CHEBI:58416"/>
        <label>ChlzD2</label>
    </ligand>
    <ligandPart>
        <name>Mg</name>
        <dbReference type="ChEBI" id="CHEBI:25107"/>
    </ligandPart>
</feature>
<feature type="binding site" evidence="1">
    <location>
        <position position="128"/>
    </location>
    <ligand>
        <name>pheophytin a</name>
        <dbReference type="ChEBI" id="CHEBI:136840"/>
        <label>D2</label>
    </ligand>
</feature>
<feature type="binding site" evidence="1">
    <location>
        <position position="141"/>
    </location>
    <ligand>
        <name>pheophytin a</name>
        <dbReference type="ChEBI" id="CHEBI:136840"/>
        <label>D2</label>
    </ligand>
</feature>
<feature type="binding site" description="axial binding residue" evidence="1">
    <location>
        <position position="196"/>
    </location>
    <ligand>
        <name>chlorophyll a</name>
        <dbReference type="ChEBI" id="CHEBI:58416"/>
        <label>PD2</label>
    </ligand>
    <ligandPart>
        <name>Mg</name>
        <dbReference type="ChEBI" id="CHEBI:25107"/>
    </ligandPart>
</feature>
<feature type="binding site" evidence="1">
    <location>
        <position position="213"/>
    </location>
    <ligand>
        <name>a plastoquinone</name>
        <dbReference type="ChEBI" id="CHEBI:17757"/>
        <label>Q(A)</label>
    </ligand>
</feature>
<feature type="binding site" evidence="1">
    <location>
        <position position="213"/>
    </location>
    <ligand>
        <name>Fe cation</name>
        <dbReference type="ChEBI" id="CHEBI:24875"/>
        <note>ligand shared with heterodimeric partner</note>
    </ligand>
</feature>
<feature type="binding site" evidence="1">
    <location>
        <position position="260"/>
    </location>
    <ligand>
        <name>a plastoquinone</name>
        <dbReference type="ChEBI" id="CHEBI:17757"/>
        <label>Q(A)</label>
    </ligand>
</feature>
<feature type="binding site" evidence="1">
    <location>
        <position position="267"/>
    </location>
    <ligand>
        <name>Fe cation</name>
        <dbReference type="ChEBI" id="CHEBI:24875"/>
        <note>ligand shared with heterodimeric partner</note>
    </ligand>
</feature>
<organism>
    <name type="scientific">Parasynechococcus marenigrum (strain WH8102)</name>
    <dbReference type="NCBI Taxonomy" id="84588"/>
    <lineage>
        <taxon>Bacteria</taxon>
        <taxon>Bacillati</taxon>
        <taxon>Cyanobacteriota</taxon>
        <taxon>Cyanophyceae</taxon>
        <taxon>Synechococcales</taxon>
        <taxon>Prochlorococcaceae</taxon>
        <taxon>Parasynechococcus</taxon>
        <taxon>Parasynechococcus marenigrum</taxon>
    </lineage>
</organism>
<gene>
    <name evidence="1" type="primary">psbD1</name>
    <name type="ordered locus">SYNW0677</name>
</gene>
<gene>
    <name evidence="1" type="primary">psbD2</name>
    <name type="ordered locus">SYNW2232</name>
</gene>
<evidence type="ECO:0000255" key="1">
    <source>
        <dbReference type="HAMAP-Rule" id="MF_01383"/>
    </source>
</evidence>
<keyword id="KW-0148">Chlorophyll</keyword>
<keyword id="KW-0157">Chromophore</keyword>
<keyword id="KW-0249">Electron transport</keyword>
<keyword id="KW-0408">Iron</keyword>
<keyword id="KW-0460">Magnesium</keyword>
<keyword id="KW-0472">Membrane</keyword>
<keyword id="KW-0479">Metal-binding</keyword>
<keyword id="KW-0560">Oxidoreductase</keyword>
<keyword id="KW-0602">Photosynthesis</keyword>
<keyword id="KW-0604">Photosystem II</keyword>
<keyword id="KW-0793">Thylakoid</keyword>
<keyword id="KW-0812">Transmembrane</keyword>
<keyword id="KW-1133">Transmembrane helix</keyword>
<keyword id="KW-0813">Transport</keyword>